<evidence type="ECO:0000255" key="1">
    <source>
        <dbReference type="HAMAP-Rule" id="MF_00116"/>
    </source>
</evidence>
<feature type="chain" id="PRO_0000182822" description="Deoxyuridine 5'-triphosphate nucleotidohydrolase">
    <location>
        <begin position="1"/>
        <end position="150"/>
    </location>
</feature>
<feature type="binding site" evidence="1">
    <location>
        <begin position="69"/>
        <end position="71"/>
    </location>
    <ligand>
        <name>substrate</name>
    </ligand>
</feature>
<feature type="binding site" evidence="1">
    <location>
        <position position="82"/>
    </location>
    <ligand>
        <name>substrate</name>
    </ligand>
</feature>
<feature type="binding site" evidence="1">
    <location>
        <begin position="86"/>
        <end position="88"/>
    </location>
    <ligand>
        <name>substrate</name>
    </ligand>
</feature>
<feature type="binding site" evidence="1">
    <location>
        <position position="96"/>
    </location>
    <ligand>
        <name>substrate</name>
    </ligand>
</feature>
<name>DUT_ACIAD</name>
<reference key="1">
    <citation type="journal article" date="2004" name="Nucleic Acids Res.">
        <title>Unique features revealed by the genome sequence of Acinetobacter sp. ADP1, a versatile and naturally transformation competent bacterium.</title>
        <authorList>
            <person name="Barbe V."/>
            <person name="Vallenet D."/>
            <person name="Fonknechten N."/>
            <person name="Kreimeyer A."/>
            <person name="Oztas S."/>
            <person name="Labarre L."/>
            <person name="Cruveiller S."/>
            <person name="Robert C."/>
            <person name="Duprat S."/>
            <person name="Wincker P."/>
            <person name="Ornston L.N."/>
            <person name="Weissenbach J."/>
            <person name="Marliere P."/>
            <person name="Cohen G.N."/>
            <person name="Medigue C."/>
        </authorList>
    </citation>
    <scope>NUCLEOTIDE SEQUENCE [LARGE SCALE GENOMIC DNA]</scope>
    <source>
        <strain>ATCC 33305 / BD413 / ADP1</strain>
    </source>
</reference>
<proteinExistence type="inferred from homology"/>
<gene>
    <name evidence="1" type="primary">dut</name>
    <name type="ordered locus">ACIAD0901</name>
</gene>
<organism>
    <name type="scientific">Acinetobacter baylyi (strain ATCC 33305 / BD413 / ADP1)</name>
    <dbReference type="NCBI Taxonomy" id="62977"/>
    <lineage>
        <taxon>Bacteria</taxon>
        <taxon>Pseudomonadati</taxon>
        <taxon>Pseudomonadota</taxon>
        <taxon>Gammaproteobacteria</taxon>
        <taxon>Moraxellales</taxon>
        <taxon>Moraxellaceae</taxon>
        <taxon>Acinetobacter</taxon>
    </lineage>
</organism>
<accession>Q6FDR0</accession>
<protein>
    <recommendedName>
        <fullName evidence="1">Deoxyuridine 5'-triphosphate nucleotidohydrolase</fullName>
        <shortName evidence="1">dUTPase</shortName>
        <ecNumber evidence="1">3.6.1.23</ecNumber>
    </recommendedName>
    <alternativeName>
        <fullName evidence="1">dUTP pyrophosphatase</fullName>
    </alternativeName>
</protein>
<comment type="function">
    <text evidence="1">This enzyme is involved in nucleotide metabolism: it produces dUMP, the immediate precursor of thymidine nucleotides and it decreases the intracellular concentration of dUTP so that uracil cannot be incorporated into DNA.</text>
</comment>
<comment type="catalytic activity">
    <reaction evidence="1">
        <text>dUTP + H2O = dUMP + diphosphate + H(+)</text>
        <dbReference type="Rhea" id="RHEA:10248"/>
        <dbReference type="ChEBI" id="CHEBI:15377"/>
        <dbReference type="ChEBI" id="CHEBI:15378"/>
        <dbReference type="ChEBI" id="CHEBI:33019"/>
        <dbReference type="ChEBI" id="CHEBI:61555"/>
        <dbReference type="ChEBI" id="CHEBI:246422"/>
        <dbReference type="EC" id="3.6.1.23"/>
    </reaction>
</comment>
<comment type="cofactor">
    <cofactor evidence="1">
        <name>Mg(2+)</name>
        <dbReference type="ChEBI" id="CHEBI:18420"/>
    </cofactor>
</comment>
<comment type="pathway">
    <text evidence="1">Pyrimidine metabolism; dUMP biosynthesis; dUMP from dCTP (dUTP route): step 2/2.</text>
</comment>
<comment type="similarity">
    <text evidence="1">Belongs to the dUTPase family.</text>
</comment>
<sequence length="150" mass="16347">MKVQVKILDQRLGQEWPLPSYATTGSAGLDLRACLDEAIQIEPGQTVLIKTGMAIYIHDTNFAGLILPRSGLGHKHGIVLGNLVGLIDSDYQGELMISVWNRGQNTFTLEPGERLAQYVLVPVIQAEFEQVEEFVATDRGAGGFGHTGQK</sequence>
<keyword id="KW-0378">Hydrolase</keyword>
<keyword id="KW-0460">Magnesium</keyword>
<keyword id="KW-0479">Metal-binding</keyword>
<keyword id="KW-0546">Nucleotide metabolism</keyword>
<dbReference type="EC" id="3.6.1.23" evidence="1"/>
<dbReference type="EMBL" id="CR543861">
    <property type="protein sequence ID" value="CAG67798.1"/>
    <property type="molecule type" value="Genomic_DNA"/>
</dbReference>
<dbReference type="RefSeq" id="WP_004922077.1">
    <property type="nucleotide sequence ID" value="NC_005966.1"/>
</dbReference>
<dbReference type="SMR" id="Q6FDR0"/>
<dbReference type="STRING" id="202950.GCA_001485005_02648"/>
<dbReference type="GeneID" id="45233360"/>
<dbReference type="KEGG" id="aci:ACIAD0901"/>
<dbReference type="eggNOG" id="COG0756">
    <property type="taxonomic scope" value="Bacteria"/>
</dbReference>
<dbReference type="HOGENOM" id="CLU_068508_1_1_6"/>
<dbReference type="OrthoDB" id="9809956at2"/>
<dbReference type="BioCyc" id="ASP62977:ACIAD_RS04160-MONOMER"/>
<dbReference type="UniPathway" id="UPA00610">
    <property type="reaction ID" value="UER00666"/>
</dbReference>
<dbReference type="Proteomes" id="UP000000430">
    <property type="component" value="Chromosome"/>
</dbReference>
<dbReference type="GO" id="GO:0004170">
    <property type="term" value="F:dUTP diphosphatase activity"/>
    <property type="evidence" value="ECO:0007669"/>
    <property type="project" value="UniProtKB-UniRule"/>
</dbReference>
<dbReference type="GO" id="GO:0000287">
    <property type="term" value="F:magnesium ion binding"/>
    <property type="evidence" value="ECO:0007669"/>
    <property type="project" value="UniProtKB-UniRule"/>
</dbReference>
<dbReference type="GO" id="GO:0006226">
    <property type="term" value="P:dUMP biosynthetic process"/>
    <property type="evidence" value="ECO:0007669"/>
    <property type="project" value="UniProtKB-UniRule"/>
</dbReference>
<dbReference type="GO" id="GO:0046081">
    <property type="term" value="P:dUTP catabolic process"/>
    <property type="evidence" value="ECO:0007669"/>
    <property type="project" value="InterPro"/>
</dbReference>
<dbReference type="CDD" id="cd07557">
    <property type="entry name" value="trimeric_dUTPase"/>
    <property type="match status" value="1"/>
</dbReference>
<dbReference type="FunFam" id="2.70.40.10:FF:000002">
    <property type="entry name" value="dUTP diphosphatase"/>
    <property type="match status" value="1"/>
</dbReference>
<dbReference type="Gene3D" id="2.70.40.10">
    <property type="match status" value="1"/>
</dbReference>
<dbReference type="HAMAP" id="MF_00116">
    <property type="entry name" value="dUTPase_bact"/>
    <property type="match status" value="1"/>
</dbReference>
<dbReference type="InterPro" id="IPR008181">
    <property type="entry name" value="dUTPase"/>
</dbReference>
<dbReference type="InterPro" id="IPR029054">
    <property type="entry name" value="dUTPase-like"/>
</dbReference>
<dbReference type="InterPro" id="IPR036157">
    <property type="entry name" value="dUTPase-like_sf"/>
</dbReference>
<dbReference type="InterPro" id="IPR033704">
    <property type="entry name" value="dUTPase_trimeric"/>
</dbReference>
<dbReference type="NCBIfam" id="TIGR00576">
    <property type="entry name" value="dut"/>
    <property type="match status" value="1"/>
</dbReference>
<dbReference type="NCBIfam" id="NF001862">
    <property type="entry name" value="PRK00601.1"/>
    <property type="match status" value="1"/>
</dbReference>
<dbReference type="PANTHER" id="PTHR11241">
    <property type="entry name" value="DEOXYURIDINE 5'-TRIPHOSPHATE NUCLEOTIDOHYDROLASE"/>
    <property type="match status" value="1"/>
</dbReference>
<dbReference type="PANTHER" id="PTHR11241:SF0">
    <property type="entry name" value="DEOXYURIDINE 5'-TRIPHOSPHATE NUCLEOTIDOHYDROLASE"/>
    <property type="match status" value="1"/>
</dbReference>
<dbReference type="Pfam" id="PF00692">
    <property type="entry name" value="dUTPase"/>
    <property type="match status" value="1"/>
</dbReference>
<dbReference type="SUPFAM" id="SSF51283">
    <property type="entry name" value="dUTPase-like"/>
    <property type="match status" value="1"/>
</dbReference>